<reference key="1">
    <citation type="journal article" date="1996" name="Biochim. Biophys. Acta">
        <title>Molecular cloning and sequence analysis of the chick melanocortin 1-receptor gene.</title>
        <authorList>
            <person name="Takeuchi S."/>
            <person name="Suzuki H."/>
            <person name="Hirose S."/>
            <person name="Yabuuchi M."/>
            <person name="Sato C."/>
            <person name="Yamamoto H."/>
            <person name="Takahashi S."/>
        </authorList>
    </citation>
    <scope>NUCLEOTIDE SEQUENCE [GENOMIC DNA]</scope>
    <source>
        <strain>Rock-Cornish breed</strain>
    </source>
</reference>
<keyword id="KW-1003">Cell membrane</keyword>
<keyword id="KW-0297">G-protein coupled receptor</keyword>
<keyword id="KW-0325">Glycoprotein</keyword>
<keyword id="KW-0449">Lipoprotein</keyword>
<keyword id="KW-0472">Membrane</keyword>
<keyword id="KW-0564">Palmitate</keyword>
<keyword id="KW-0597">Phosphoprotein</keyword>
<keyword id="KW-0675">Receptor</keyword>
<keyword id="KW-1185">Reference proteome</keyword>
<keyword id="KW-0807">Transducer</keyword>
<keyword id="KW-0812">Transmembrane</keyword>
<keyword id="KW-1133">Transmembrane helix</keyword>
<protein>
    <recommendedName>
        <fullName>Melanocyte-stimulating hormone receptor</fullName>
        <shortName>MSH-R</shortName>
    </recommendedName>
    <alternativeName>
        <fullName>Melanocortin receptor 1</fullName>
        <shortName>MC1-R</shortName>
    </alternativeName>
</protein>
<evidence type="ECO:0000250" key="1">
    <source>
        <dbReference type="UniProtKB" id="Q01726"/>
    </source>
</evidence>
<evidence type="ECO:0000255" key="2"/>
<evidence type="ECO:0000255" key="3">
    <source>
        <dbReference type="PROSITE-ProRule" id="PRU00521"/>
    </source>
</evidence>
<proteinExistence type="inferred from homology"/>
<organism>
    <name type="scientific">Gallus gallus</name>
    <name type="common">Chicken</name>
    <dbReference type="NCBI Taxonomy" id="9031"/>
    <lineage>
        <taxon>Eukaryota</taxon>
        <taxon>Metazoa</taxon>
        <taxon>Chordata</taxon>
        <taxon>Craniata</taxon>
        <taxon>Vertebrata</taxon>
        <taxon>Euteleostomi</taxon>
        <taxon>Archelosauria</taxon>
        <taxon>Archosauria</taxon>
        <taxon>Dinosauria</taxon>
        <taxon>Saurischia</taxon>
        <taxon>Theropoda</taxon>
        <taxon>Coelurosauria</taxon>
        <taxon>Aves</taxon>
        <taxon>Neognathae</taxon>
        <taxon>Galloanserae</taxon>
        <taxon>Galliformes</taxon>
        <taxon>Phasianidae</taxon>
        <taxon>Phasianinae</taxon>
        <taxon>Gallus</taxon>
    </lineage>
</organism>
<comment type="function">
    <text evidence="1">Receptor for MSH (alpha, beta and gamma) and ACTH (By similarity). The activity of this receptor is mediated by G proteins which activate adenylate cyclase (By similarity). Mediates melanogenesis via regulation of cAMP signaling in melanocytes (By similarity).</text>
</comment>
<comment type="subcellular location">
    <subcellularLocation>
        <location evidence="1">Cell membrane</location>
        <topology evidence="2">Multi-pass membrane protein</topology>
    </subcellularLocation>
</comment>
<comment type="similarity">
    <text evidence="3">Belongs to the G-protein coupled receptor 1 family.</text>
</comment>
<name>MSHR_CHICK</name>
<gene>
    <name type="primary">MC1R</name>
</gene>
<feature type="chain" id="PRO_0000069859" description="Melanocyte-stimulating hormone receptor">
    <location>
        <begin position="1"/>
        <end position="314"/>
    </location>
</feature>
<feature type="topological domain" description="Extracellular" evidence="2">
    <location>
        <begin position="1"/>
        <end position="35"/>
    </location>
</feature>
<feature type="transmembrane region" description="Helical; Name=1" evidence="2">
    <location>
        <begin position="36"/>
        <end position="61"/>
    </location>
</feature>
<feature type="topological domain" description="Cytoplasmic" evidence="2">
    <location>
        <begin position="62"/>
        <end position="70"/>
    </location>
</feature>
<feature type="transmembrane region" description="Helical; Name=2" evidence="2">
    <location>
        <begin position="71"/>
        <end position="91"/>
    </location>
</feature>
<feature type="topological domain" description="Extracellular" evidence="2">
    <location>
        <begin position="92"/>
        <end position="116"/>
    </location>
</feature>
<feature type="transmembrane region" description="Helical; Name=3" evidence="2">
    <location>
        <begin position="117"/>
        <end position="138"/>
    </location>
</feature>
<feature type="topological domain" description="Cytoplasmic" evidence="2">
    <location>
        <begin position="139"/>
        <end position="161"/>
    </location>
</feature>
<feature type="transmembrane region" description="Helical; Name=4" evidence="2">
    <location>
        <begin position="162"/>
        <end position="181"/>
    </location>
</feature>
<feature type="topological domain" description="Extracellular" evidence="2">
    <location>
        <begin position="182"/>
        <end position="189"/>
    </location>
</feature>
<feature type="transmembrane region" description="Helical; Name=5" evidence="2">
    <location>
        <begin position="190"/>
        <end position="209"/>
    </location>
</feature>
<feature type="topological domain" description="Cytoplasmic" evidence="2">
    <location>
        <begin position="210"/>
        <end position="237"/>
    </location>
</feature>
<feature type="transmembrane region" description="Helical; Name=6" evidence="2">
    <location>
        <begin position="238"/>
        <end position="263"/>
    </location>
</feature>
<feature type="topological domain" description="Extracellular" evidence="2">
    <location>
        <begin position="264"/>
        <end position="276"/>
    </location>
</feature>
<feature type="transmembrane region" description="Helical; Name=7" evidence="2">
    <location>
        <begin position="277"/>
        <end position="297"/>
    </location>
</feature>
<feature type="topological domain" description="Cytoplasmic" evidence="2">
    <location>
        <begin position="298"/>
        <end position="314"/>
    </location>
</feature>
<feature type="lipid moiety-binding region" description="S-palmitoyl cysteine" evidence="2">
    <location>
        <position position="312"/>
    </location>
</feature>
<feature type="glycosylation site" description="N-linked (GlcNAc...) asparagine" evidence="2">
    <location>
        <position position="15"/>
    </location>
</feature>
<feature type="glycosylation site" description="N-linked (GlcNAc...) asparagine" evidence="2">
    <location>
        <position position="20"/>
    </location>
</feature>
<feature type="glycosylation site" description="N-linked (GlcNAc...) asparagine" evidence="2">
    <location>
        <position position="23"/>
    </location>
</feature>
<sequence length="314" mass="35297">MSMLAPLRLVREPWNASEGNQSNATAGAGGAWCQGLDIPNELFLTLGLVSLVENLLVVAAILKNRNLHSPTYYFICCLAVSDMLVSVSNLAKTLFMLLMEHGVLVIRASIVRHMDNVIDMLICSSVVSSLSFLGVIAVDRYITIFYALRYHSIMTLQRAVVTMASVWLASTVSSTVLITYYRNNAILLCLIGFFLFMLVLMLVLYIHMFALACHHVRSISSQQKQPTIYRTSSLKGAVTLTILLGVFFICWGPFFFHLILIVTCPTNPFCTCFFSYFNLFLILIICNSVVDPLIYAFRSQELRRTLREVVLCSW</sequence>
<accession>P55167</accession>
<dbReference type="EMBL" id="D78272">
    <property type="protein sequence ID" value="BAA11336.1"/>
    <property type="molecule type" value="Genomic_DNA"/>
</dbReference>
<dbReference type="PIR" id="S70005">
    <property type="entry name" value="S70005"/>
</dbReference>
<dbReference type="PIR" id="S71420">
    <property type="entry name" value="S71420"/>
</dbReference>
<dbReference type="SMR" id="P55167"/>
<dbReference type="FunCoup" id="P55167">
    <property type="interactions" value="172"/>
</dbReference>
<dbReference type="STRING" id="9031.ENSGALP00000071620"/>
<dbReference type="GlyCosmos" id="P55167">
    <property type="glycosylation" value="3 sites, No reported glycans"/>
</dbReference>
<dbReference type="GlyGen" id="P55167">
    <property type="glycosylation" value="3 sites"/>
</dbReference>
<dbReference type="PaxDb" id="9031-ENSGALP00000038021"/>
<dbReference type="VEuPathDB" id="HostDB:geneid_427562"/>
<dbReference type="eggNOG" id="KOG3656">
    <property type="taxonomic scope" value="Eukaryota"/>
</dbReference>
<dbReference type="InParanoid" id="P55167"/>
<dbReference type="OrthoDB" id="5970330at2759"/>
<dbReference type="PhylomeDB" id="P55167"/>
<dbReference type="Proteomes" id="UP000000539">
    <property type="component" value="Unassembled WGS sequence"/>
</dbReference>
<dbReference type="GO" id="GO:0005737">
    <property type="term" value="C:cytoplasm"/>
    <property type="evidence" value="ECO:0000318"/>
    <property type="project" value="GO_Central"/>
</dbReference>
<dbReference type="GO" id="GO:0005886">
    <property type="term" value="C:plasma membrane"/>
    <property type="evidence" value="ECO:0000250"/>
    <property type="project" value="UniProtKB"/>
</dbReference>
<dbReference type="GO" id="GO:0004980">
    <property type="term" value="F:melanocyte-stimulating hormone receptor activity"/>
    <property type="evidence" value="ECO:0000318"/>
    <property type="project" value="GO_Central"/>
</dbReference>
<dbReference type="GO" id="GO:0007189">
    <property type="term" value="P:adenylate cyclase-activating G protein-coupled receptor signaling pathway"/>
    <property type="evidence" value="ECO:0000318"/>
    <property type="project" value="GO_Central"/>
</dbReference>
<dbReference type="GO" id="GO:0019222">
    <property type="term" value="P:regulation of metabolic process"/>
    <property type="evidence" value="ECO:0000318"/>
    <property type="project" value="GO_Central"/>
</dbReference>
<dbReference type="CDD" id="cd15351">
    <property type="entry name" value="7tmA_MC1R"/>
    <property type="match status" value="1"/>
</dbReference>
<dbReference type="FunFam" id="1.20.1070.10:FF:000211">
    <property type="entry name" value="Melanocyte-stimulating hormone receptor"/>
    <property type="match status" value="1"/>
</dbReference>
<dbReference type="Gene3D" id="1.20.1070.10">
    <property type="entry name" value="Rhodopsin 7-helix transmembrane proteins"/>
    <property type="match status" value="1"/>
</dbReference>
<dbReference type="InterPro" id="IPR000276">
    <property type="entry name" value="GPCR_Rhodpsn"/>
</dbReference>
<dbReference type="InterPro" id="IPR017452">
    <property type="entry name" value="GPCR_Rhodpsn_7TM"/>
</dbReference>
<dbReference type="InterPro" id="IPR001671">
    <property type="entry name" value="Melcrt_ACTH_rcpt"/>
</dbReference>
<dbReference type="InterPro" id="IPR000761">
    <property type="entry name" value="MSH_rcpt"/>
</dbReference>
<dbReference type="PANTHER" id="PTHR22750">
    <property type="entry name" value="G-PROTEIN COUPLED RECEPTOR"/>
    <property type="match status" value="1"/>
</dbReference>
<dbReference type="Pfam" id="PF00001">
    <property type="entry name" value="7tm_1"/>
    <property type="match status" value="2"/>
</dbReference>
<dbReference type="PRINTS" id="PR00237">
    <property type="entry name" value="GPCRRHODOPSN"/>
</dbReference>
<dbReference type="PRINTS" id="PR00534">
    <property type="entry name" value="MCRFAMILY"/>
</dbReference>
<dbReference type="PRINTS" id="PR00536">
    <property type="entry name" value="MELNOCYTESHR"/>
</dbReference>
<dbReference type="SMART" id="SM01381">
    <property type="entry name" value="7TM_GPCR_Srsx"/>
    <property type="match status" value="1"/>
</dbReference>
<dbReference type="SUPFAM" id="SSF81321">
    <property type="entry name" value="Family A G protein-coupled receptor-like"/>
    <property type="match status" value="1"/>
</dbReference>
<dbReference type="PROSITE" id="PS00237">
    <property type="entry name" value="G_PROTEIN_RECEP_F1_1"/>
    <property type="match status" value="1"/>
</dbReference>
<dbReference type="PROSITE" id="PS50262">
    <property type="entry name" value="G_PROTEIN_RECEP_F1_2"/>
    <property type="match status" value="1"/>
</dbReference>